<protein>
    <recommendedName>
        <fullName evidence="1">Large ribosomal subunit protein uL4</fullName>
    </recommendedName>
    <alternativeName>
        <fullName evidence="2">50S ribosomal protein L4</fullName>
    </alternativeName>
</protein>
<keyword id="KW-1185">Reference proteome</keyword>
<keyword id="KW-0687">Ribonucleoprotein</keyword>
<keyword id="KW-0689">Ribosomal protein</keyword>
<keyword id="KW-0694">RNA-binding</keyword>
<keyword id="KW-0699">rRNA-binding</keyword>
<accession>B8H4D5</accession>
<dbReference type="EMBL" id="CP001340">
    <property type="protein sequence ID" value="ACL94772.1"/>
    <property type="molecule type" value="Genomic_DNA"/>
</dbReference>
<dbReference type="RefSeq" id="WP_010919128.1">
    <property type="nucleotide sequence ID" value="NC_011916.1"/>
</dbReference>
<dbReference type="RefSeq" id="YP_002516680.1">
    <property type="nucleotide sequence ID" value="NC_011916.1"/>
</dbReference>
<dbReference type="SMR" id="B8H4D5"/>
<dbReference type="GeneID" id="7333039"/>
<dbReference type="KEGG" id="ccs:CCNA_01307"/>
<dbReference type="PATRIC" id="fig|565050.3.peg.1291"/>
<dbReference type="HOGENOM" id="CLU_041575_5_1_5"/>
<dbReference type="OrthoDB" id="9803201at2"/>
<dbReference type="PhylomeDB" id="B8H4D5"/>
<dbReference type="Proteomes" id="UP000001364">
    <property type="component" value="Chromosome"/>
</dbReference>
<dbReference type="GO" id="GO:1990904">
    <property type="term" value="C:ribonucleoprotein complex"/>
    <property type="evidence" value="ECO:0007669"/>
    <property type="project" value="UniProtKB-KW"/>
</dbReference>
<dbReference type="GO" id="GO:0005840">
    <property type="term" value="C:ribosome"/>
    <property type="evidence" value="ECO:0007669"/>
    <property type="project" value="UniProtKB-KW"/>
</dbReference>
<dbReference type="GO" id="GO:0019843">
    <property type="term" value="F:rRNA binding"/>
    <property type="evidence" value="ECO:0007669"/>
    <property type="project" value="UniProtKB-UniRule"/>
</dbReference>
<dbReference type="GO" id="GO:0003735">
    <property type="term" value="F:structural constituent of ribosome"/>
    <property type="evidence" value="ECO:0007669"/>
    <property type="project" value="InterPro"/>
</dbReference>
<dbReference type="GO" id="GO:0006412">
    <property type="term" value="P:translation"/>
    <property type="evidence" value="ECO:0007669"/>
    <property type="project" value="UniProtKB-UniRule"/>
</dbReference>
<dbReference type="Gene3D" id="3.40.1370.10">
    <property type="match status" value="1"/>
</dbReference>
<dbReference type="HAMAP" id="MF_01328_B">
    <property type="entry name" value="Ribosomal_uL4_B"/>
    <property type="match status" value="1"/>
</dbReference>
<dbReference type="InterPro" id="IPR002136">
    <property type="entry name" value="Ribosomal_uL4"/>
</dbReference>
<dbReference type="InterPro" id="IPR013005">
    <property type="entry name" value="Ribosomal_uL4-like"/>
</dbReference>
<dbReference type="InterPro" id="IPR023574">
    <property type="entry name" value="Ribosomal_uL4_dom_sf"/>
</dbReference>
<dbReference type="NCBIfam" id="TIGR03953">
    <property type="entry name" value="rplD_bact"/>
    <property type="match status" value="1"/>
</dbReference>
<dbReference type="PANTHER" id="PTHR10746">
    <property type="entry name" value="50S RIBOSOMAL PROTEIN L4"/>
    <property type="match status" value="1"/>
</dbReference>
<dbReference type="PANTHER" id="PTHR10746:SF6">
    <property type="entry name" value="LARGE RIBOSOMAL SUBUNIT PROTEIN UL4M"/>
    <property type="match status" value="1"/>
</dbReference>
<dbReference type="Pfam" id="PF00573">
    <property type="entry name" value="Ribosomal_L4"/>
    <property type="match status" value="1"/>
</dbReference>
<dbReference type="SUPFAM" id="SSF52166">
    <property type="entry name" value="Ribosomal protein L4"/>
    <property type="match status" value="1"/>
</dbReference>
<reference key="1">
    <citation type="journal article" date="2010" name="J. Bacteriol.">
        <title>The genetic basis of laboratory adaptation in Caulobacter crescentus.</title>
        <authorList>
            <person name="Marks M.E."/>
            <person name="Castro-Rojas C.M."/>
            <person name="Teiling C."/>
            <person name="Du L."/>
            <person name="Kapatral V."/>
            <person name="Walunas T.L."/>
            <person name="Crosson S."/>
        </authorList>
    </citation>
    <scope>NUCLEOTIDE SEQUENCE [LARGE SCALE GENOMIC DNA]</scope>
    <source>
        <strain>NA1000 / CB15N</strain>
    </source>
</reference>
<organism>
    <name type="scientific">Caulobacter vibrioides (strain NA1000 / CB15N)</name>
    <name type="common">Caulobacter crescentus</name>
    <dbReference type="NCBI Taxonomy" id="565050"/>
    <lineage>
        <taxon>Bacteria</taxon>
        <taxon>Pseudomonadati</taxon>
        <taxon>Pseudomonadota</taxon>
        <taxon>Alphaproteobacteria</taxon>
        <taxon>Caulobacterales</taxon>
        <taxon>Caulobacteraceae</taxon>
        <taxon>Caulobacter</taxon>
    </lineage>
</organism>
<sequence length="212" mass="22792">MKLDVIKLDGGKAGSVDLDDAIFGIDEIRGDILQRVVTWQLAKRRSGNHKIQVRNEVSRTSKKMYKQKGTGGARHGSRRAAQFVGGAKAHGPVVRSHAFDLPKKIRALALRHALSSKAKAGSLVVVDSVALTEAKTAALRATFDKIGLKNALVIAGPEVDANFKLAARNIPNVDVLPNAGLNVYDVLRRQTLVLTKDAVEAISARFAEKEAA</sequence>
<feature type="chain" id="PRO_1000165995" description="Large ribosomal subunit protein uL4">
    <location>
        <begin position="1"/>
        <end position="212"/>
    </location>
</feature>
<proteinExistence type="inferred from homology"/>
<name>RL4_CAUVN</name>
<evidence type="ECO:0000255" key="1">
    <source>
        <dbReference type="HAMAP-Rule" id="MF_01328"/>
    </source>
</evidence>
<evidence type="ECO:0000305" key="2"/>
<gene>
    <name evidence="1" type="primary">rplD</name>
    <name type="ordered locus">CCNA_01307</name>
</gene>
<comment type="function">
    <text evidence="1">One of the primary rRNA binding proteins, this protein initially binds near the 5'-end of the 23S rRNA. It is important during the early stages of 50S assembly. It makes multiple contacts with different domains of the 23S rRNA in the assembled 50S subunit and ribosome.</text>
</comment>
<comment type="function">
    <text evidence="1">Forms part of the polypeptide exit tunnel.</text>
</comment>
<comment type="subunit">
    <text evidence="1">Part of the 50S ribosomal subunit.</text>
</comment>
<comment type="similarity">
    <text evidence="1">Belongs to the universal ribosomal protein uL4 family.</text>
</comment>